<keyword id="KW-0143">Chaperone</keyword>
<keyword id="KW-0963">Cytoplasm</keyword>
<keyword id="KW-0996">Nickel insertion</keyword>
<keyword id="KW-1185">Reference proteome</keyword>
<reference key="1">
    <citation type="submission" date="2007-04" db="EMBL/GenBank/DDBJ databases">
        <title>Complete genome sequence of the nitrogen-fixing bacterium Azorhizobium caulinodans ORS571.</title>
        <authorList>
            <person name="Lee K.B."/>
            <person name="Backer P.D."/>
            <person name="Aono T."/>
            <person name="Liu C.T."/>
            <person name="Suzuki S."/>
            <person name="Suzuki T."/>
            <person name="Kaneko T."/>
            <person name="Yamada M."/>
            <person name="Tabata S."/>
            <person name="Kupfer D.M."/>
            <person name="Najar F.Z."/>
            <person name="Wiley G.B."/>
            <person name="Roe B."/>
            <person name="Binnewies T."/>
            <person name="Ussery D."/>
            <person name="Vereecke D."/>
            <person name="Gevers D."/>
            <person name="Holsters M."/>
            <person name="Oyaizu H."/>
        </authorList>
    </citation>
    <scope>NUCLEOTIDE SEQUENCE [LARGE SCALE GENOMIC DNA]</scope>
    <source>
        <strain>ATCC 43989 / DSM 5975 / JCM 20966 / LMG 6465 / NBRC 14845 / NCIMB 13405 / ORS 571</strain>
    </source>
</reference>
<accession>A8I4T0</accession>
<name>UREF_AZOC5</name>
<sequence length="232" mass="24164">MTMAETGAPPSALALFAWLSPGFPVGAYAYSHALEWAAEAGDITDESSLESWLRDLMLLGFGRADGILLAHAYGAGAAGDVPALAQVNARAVALSPTAELRLETCQQGRSFLDAVRAAWPHGGLDAAAAHLPPDVAYPVAVGYAAALHGVPRAAVLEAYLFAVTQTLVSAALRIAPIGQTAGTRVVARLMPAVQALAGDIPTLTLDDLGTATFRADLGSMRHETQYTRLFRS</sequence>
<gene>
    <name evidence="1" type="primary">ureF</name>
    <name type="ordered locus">AZC_1768</name>
</gene>
<proteinExistence type="inferred from homology"/>
<dbReference type="EMBL" id="AP009384">
    <property type="protein sequence ID" value="BAF87766.1"/>
    <property type="molecule type" value="Genomic_DNA"/>
</dbReference>
<dbReference type="RefSeq" id="WP_012170296.1">
    <property type="nucleotide sequence ID" value="NC_009937.1"/>
</dbReference>
<dbReference type="SMR" id="A8I4T0"/>
<dbReference type="STRING" id="438753.AZC_1768"/>
<dbReference type="KEGG" id="azc:AZC_1768"/>
<dbReference type="eggNOG" id="COG0830">
    <property type="taxonomic scope" value="Bacteria"/>
</dbReference>
<dbReference type="HOGENOM" id="CLU_049215_2_0_5"/>
<dbReference type="Proteomes" id="UP000000270">
    <property type="component" value="Chromosome"/>
</dbReference>
<dbReference type="GO" id="GO:0005737">
    <property type="term" value="C:cytoplasm"/>
    <property type="evidence" value="ECO:0007669"/>
    <property type="project" value="UniProtKB-SubCell"/>
</dbReference>
<dbReference type="GO" id="GO:0016151">
    <property type="term" value="F:nickel cation binding"/>
    <property type="evidence" value="ECO:0007669"/>
    <property type="project" value="UniProtKB-UniRule"/>
</dbReference>
<dbReference type="Gene3D" id="1.10.4190.10">
    <property type="entry name" value="Urease accessory protein UreF"/>
    <property type="match status" value="1"/>
</dbReference>
<dbReference type="HAMAP" id="MF_01385">
    <property type="entry name" value="UreF"/>
    <property type="match status" value="1"/>
</dbReference>
<dbReference type="InterPro" id="IPR002639">
    <property type="entry name" value="UreF"/>
</dbReference>
<dbReference type="InterPro" id="IPR038277">
    <property type="entry name" value="UreF_sf"/>
</dbReference>
<dbReference type="PANTHER" id="PTHR33620">
    <property type="entry name" value="UREASE ACCESSORY PROTEIN F"/>
    <property type="match status" value="1"/>
</dbReference>
<dbReference type="PANTHER" id="PTHR33620:SF1">
    <property type="entry name" value="UREASE ACCESSORY PROTEIN F"/>
    <property type="match status" value="1"/>
</dbReference>
<dbReference type="Pfam" id="PF01730">
    <property type="entry name" value="UreF"/>
    <property type="match status" value="1"/>
</dbReference>
<dbReference type="PIRSF" id="PIRSF009467">
    <property type="entry name" value="Ureas_acces_UreF"/>
    <property type="match status" value="1"/>
</dbReference>
<organism>
    <name type="scientific">Azorhizobium caulinodans (strain ATCC 43989 / DSM 5975 / JCM 20966 / LMG 6465 / NBRC 14845 / NCIMB 13405 / ORS 571)</name>
    <dbReference type="NCBI Taxonomy" id="438753"/>
    <lineage>
        <taxon>Bacteria</taxon>
        <taxon>Pseudomonadati</taxon>
        <taxon>Pseudomonadota</taxon>
        <taxon>Alphaproteobacteria</taxon>
        <taxon>Hyphomicrobiales</taxon>
        <taxon>Xanthobacteraceae</taxon>
        <taxon>Azorhizobium</taxon>
    </lineage>
</organism>
<protein>
    <recommendedName>
        <fullName evidence="1">Urease accessory protein UreF</fullName>
    </recommendedName>
</protein>
<feature type="chain" id="PRO_0000344075" description="Urease accessory protein UreF">
    <location>
        <begin position="1"/>
        <end position="232"/>
    </location>
</feature>
<evidence type="ECO:0000255" key="1">
    <source>
        <dbReference type="HAMAP-Rule" id="MF_01385"/>
    </source>
</evidence>
<comment type="function">
    <text evidence="1">Required for maturation of urease via the functional incorporation of the urease nickel metallocenter.</text>
</comment>
<comment type="subunit">
    <text evidence="1">UreD, UreF and UreG form a complex that acts as a GTP-hydrolysis-dependent molecular chaperone, activating the urease apoprotein by helping to assemble the nickel containing metallocenter of UreC. The UreE protein probably delivers the nickel.</text>
</comment>
<comment type="subcellular location">
    <subcellularLocation>
        <location evidence="1">Cytoplasm</location>
    </subcellularLocation>
</comment>
<comment type="similarity">
    <text evidence="1">Belongs to the UreF family.</text>
</comment>